<name>CH60_METHJ</name>
<reference key="1">
    <citation type="journal article" date="2016" name="Stand. Genomic Sci.">
        <title>Complete genome sequence of Methanospirillum hungatei type strain JF1.</title>
        <authorList>
            <person name="Gunsalus R.P."/>
            <person name="Cook L.E."/>
            <person name="Crable B."/>
            <person name="Rohlin L."/>
            <person name="McDonald E."/>
            <person name="Mouttaki H."/>
            <person name="Sieber J.R."/>
            <person name="Poweleit N."/>
            <person name="Zhou H."/>
            <person name="Lapidus A.L."/>
            <person name="Daligault H.E."/>
            <person name="Land M."/>
            <person name="Gilna P."/>
            <person name="Ivanova N."/>
            <person name="Kyrpides N."/>
            <person name="Culley D.E."/>
            <person name="McInerney M.J."/>
        </authorList>
    </citation>
    <scope>NUCLEOTIDE SEQUENCE [LARGE SCALE GENOMIC DNA]</scope>
    <source>
        <strain>ATCC 27890 / DSM 864 / NBRC 100397 / JF-1</strain>
    </source>
</reference>
<comment type="function">
    <text evidence="1">Together with its co-chaperonin GroES, plays an essential role in assisting protein folding. The GroEL-GroES system forms a nano-cage that allows encapsulation of the non-native substrate proteins and provides a physical environment optimized to promote and accelerate protein folding.</text>
</comment>
<comment type="catalytic activity">
    <reaction evidence="1">
        <text>ATP + H2O + a folded polypeptide = ADP + phosphate + an unfolded polypeptide.</text>
        <dbReference type="EC" id="5.6.1.7"/>
    </reaction>
</comment>
<comment type="subunit">
    <text evidence="1">Forms a cylinder of 14 subunits composed of two heptameric rings stacked back-to-back. Interacts with the co-chaperonin GroES.</text>
</comment>
<comment type="subcellular location">
    <subcellularLocation>
        <location evidence="1">Cytoplasm</location>
    </subcellularLocation>
</comment>
<comment type="similarity">
    <text evidence="1">Belongs to the chaperonin (HSP60) family.</text>
</comment>
<sequence>MSAKQLMFNENARHALLEGVNKVANTVKITLGPKGRNVVLDKAGGPVVTNDGVTIAKEIELKDKFENVGAKLIKEVASKTQDTTGDGTTTATVLAQAMITEGIKNITAGANPIEIKKGILKAVDAAVASIKAKSIEVKDKETINRIAIISANNDEEIGNLISEAMDRVGYNGVITVENSKTLETTLEHVEGMQFDRGYISPYMVTDQERRVVEFEEPYILITDRKISSLKTLIPVLEMIAQSGKPLLIIADDVDGEAQTALILNIIRGAIKVCAVKAPEFGDVRKEVLQDIAILTGGTVISEERNLAIEDVTLDMLGQARTVKVDQDKTTIVGGKGKKSDIDTRKKLIESQLNITEKKYDKTTLQNRLAKLSGGVAVIKAGAATETEVKEKKMRIDDALNATKAAVEEGYVAGGGVTLFRAIKALESMKADPEQMIGVNIVKRALEEPLRQIADNAGREGAEVIAMIKSNASETYGYNAKTDTYEDLLQAGVLDPTKVVRSGLQNAASIAGMLLSTEAVVVDFDEEKDKTSAAIII</sequence>
<dbReference type="EC" id="5.6.1.7" evidence="1"/>
<dbReference type="EMBL" id="CP000254">
    <property type="protein sequence ID" value="ABD40806.1"/>
    <property type="molecule type" value="Genomic_DNA"/>
</dbReference>
<dbReference type="RefSeq" id="WP_011448085.1">
    <property type="nucleotide sequence ID" value="NC_007796.1"/>
</dbReference>
<dbReference type="SMR" id="Q2FPN5"/>
<dbReference type="STRING" id="323259.Mhun_1056"/>
<dbReference type="EnsemblBacteria" id="ABD40806">
    <property type="protein sequence ID" value="ABD40806"/>
    <property type="gene ID" value="Mhun_1056"/>
</dbReference>
<dbReference type="GeneID" id="3924732"/>
<dbReference type="KEGG" id="mhu:Mhun_1056"/>
<dbReference type="eggNOG" id="arCOG05154">
    <property type="taxonomic scope" value="Archaea"/>
</dbReference>
<dbReference type="HOGENOM" id="CLU_016503_3_0_2"/>
<dbReference type="InParanoid" id="Q2FPN5"/>
<dbReference type="OrthoDB" id="106945at2157"/>
<dbReference type="Proteomes" id="UP000001941">
    <property type="component" value="Chromosome"/>
</dbReference>
<dbReference type="GO" id="GO:0005737">
    <property type="term" value="C:cytoplasm"/>
    <property type="evidence" value="ECO:0007669"/>
    <property type="project" value="UniProtKB-SubCell"/>
</dbReference>
<dbReference type="GO" id="GO:0005524">
    <property type="term" value="F:ATP binding"/>
    <property type="evidence" value="ECO:0007669"/>
    <property type="project" value="UniProtKB-UniRule"/>
</dbReference>
<dbReference type="GO" id="GO:0140662">
    <property type="term" value="F:ATP-dependent protein folding chaperone"/>
    <property type="evidence" value="ECO:0007669"/>
    <property type="project" value="InterPro"/>
</dbReference>
<dbReference type="GO" id="GO:0016853">
    <property type="term" value="F:isomerase activity"/>
    <property type="evidence" value="ECO:0007669"/>
    <property type="project" value="UniProtKB-KW"/>
</dbReference>
<dbReference type="GO" id="GO:0051082">
    <property type="term" value="F:unfolded protein binding"/>
    <property type="evidence" value="ECO:0007669"/>
    <property type="project" value="UniProtKB-UniRule"/>
</dbReference>
<dbReference type="GO" id="GO:0042026">
    <property type="term" value="P:protein refolding"/>
    <property type="evidence" value="ECO:0007669"/>
    <property type="project" value="UniProtKB-UniRule"/>
</dbReference>
<dbReference type="CDD" id="cd03344">
    <property type="entry name" value="GroEL"/>
    <property type="match status" value="1"/>
</dbReference>
<dbReference type="FunFam" id="3.50.7.10:FF:000001">
    <property type="entry name" value="60 kDa chaperonin"/>
    <property type="match status" value="1"/>
</dbReference>
<dbReference type="Gene3D" id="3.50.7.10">
    <property type="entry name" value="GroEL"/>
    <property type="match status" value="1"/>
</dbReference>
<dbReference type="Gene3D" id="1.10.560.10">
    <property type="entry name" value="GroEL-like equatorial domain"/>
    <property type="match status" value="1"/>
</dbReference>
<dbReference type="Gene3D" id="3.30.260.10">
    <property type="entry name" value="TCP-1-like chaperonin intermediate domain"/>
    <property type="match status" value="1"/>
</dbReference>
<dbReference type="HAMAP" id="MF_00600">
    <property type="entry name" value="CH60"/>
    <property type="match status" value="1"/>
</dbReference>
<dbReference type="InterPro" id="IPR018370">
    <property type="entry name" value="Chaperonin_Cpn60_CS"/>
</dbReference>
<dbReference type="InterPro" id="IPR001844">
    <property type="entry name" value="Cpn60/GroEL"/>
</dbReference>
<dbReference type="InterPro" id="IPR002423">
    <property type="entry name" value="Cpn60/GroEL/TCP-1"/>
</dbReference>
<dbReference type="InterPro" id="IPR027409">
    <property type="entry name" value="GroEL-like_apical_dom_sf"/>
</dbReference>
<dbReference type="InterPro" id="IPR027413">
    <property type="entry name" value="GROEL-like_equatorial_sf"/>
</dbReference>
<dbReference type="InterPro" id="IPR027410">
    <property type="entry name" value="TCP-1-like_intermed_sf"/>
</dbReference>
<dbReference type="NCBIfam" id="TIGR02348">
    <property type="entry name" value="GroEL"/>
    <property type="match status" value="1"/>
</dbReference>
<dbReference type="NCBIfam" id="NF000592">
    <property type="entry name" value="PRK00013.1"/>
    <property type="match status" value="1"/>
</dbReference>
<dbReference type="NCBIfam" id="NF009487">
    <property type="entry name" value="PRK12849.1"/>
    <property type="match status" value="1"/>
</dbReference>
<dbReference type="NCBIfam" id="NF009488">
    <property type="entry name" value="PRK12850.1"/>
    <property type="match status" value="1"/>
</dbReference>
<dbReference type="NCBIfam" id="NF009489">
    <property type="entry name" value="PRK12851.1"/>
    <property type="match status" value="1"/>
</dbReference>
<dbReference type="PANTHER" id="PTHR45633">
    <property type="entry name" value="60 KDA HEAT SHOCK PROTEIN, MITOCHONDRIAL"/>
    <property type="match status" value="1"/>
</dbReference>
<dbReference type="Pfam" id="PF00118">
    <property type="entry name" value="Cpn60_TCP1"/>
    <property type="match status" value="1"/>
</dbReference>
<dbReference type="PRINTS" id="PR00298">
    <property type="entry name" value="CHAPERONIN60"/>
</dbReference>
<dbReference type="SUPFAM" id="SSF52029">
    <property type="entry name" value="GroEL apical domain-like"/>
    <property type="match status" value="1"/>
</dbReference>
<dbReference type="SUPFAM" id="SSF48592">
    <property type="entry name" value="GroEL equatorial domain-like"/>
    <property type="match status" value="1"/>
</dbReference>
<dbReference type="SUPFAM" id="SSF54849">
    <property type="entry name" value="GroEL-intermediate domain like"/>
    <property type="match status" value="1"/>
</dbReference>
<dbReference type="PROSITE" id="PS00296">
    <property type="entry name" value="CHAPERONINS_CPN60"/>
    <property type="match status" value="1"/>
</dbReference>
<accession>Q2FPN5</accession>
<proteinExistence type="inferred from homology"/>
<gene>
    <name evidence="1" type="primary">groEL</name>
    <name evidence="1" type="synonym">groL</name>
    <name type="ordered locus">Mhun_1056</name>
</gene>
<evidence type="ECO:0000255" key="1">
    <source>
        <dbReference type="HAMAP-Rule" id="MF_00600"/>
    </source>
</evidence>
<keyword id="KW-0067">ATP-binding</keyword>
<keyword id="KW-0143">Chaperone</keyword>
<keyword id="KW-0963">Cytoplasm</keyword>
<keyword id="KW-0413">Isomerase</keyword>
<keyword id="KW-0547">Nucleotide-binding</keyword>
<keyword id="KW-1185">Reference proteome</keyword>
<feature type="chain" id="PRO_0000257025" description="Chaperonin GroEL">
    <location>
        <begin position="1"/>
        <end position="536"/>
    </location>
</feature>
<feature type="binding site" evidence="1">
    <location>
        <begin position="30"/>
        <end position="33"/>
    </location>
    <ligand>
        <name>ATP</name>
        <dbReference type="ChEBI" id="CHEBI:30616"/>
    </ligand>
</feature>
<feature type="binding site" evidence="1">
    <location>
        <begin position="86"/>
        <end position="90"/>
    </location>
    <ligand>
        <name>ATP</name>
        <dbReference type="ChEBI" id="CHEBI:30616"/>
    </ligand>
</feature>
<feature type="binding site" evidence="1">
    <location>
        <position position="414"/>
    </location>
    <ligand>
        <name>ATP</name>
        <dbReference type="ChEBI" id="CHEBI:30616"/>
    </ligand>
</feature>
<feature type="binding site" evidence="1">
    <location>
        <position position="494"/>
    </location>
    <ligand>
        <name>ATP</name>
        <dbReference type="ChEBI" id="CHEBI:30616"/>
    </ligand>
</feature>
<organism>
    <name type="scientific">Methanospirillum hungatei JF-1 (strain ATCC 27890 / DSM 864 / NBRC 100397 / JF-1)</name>
    <dbReference type="NCBI Taxonomy" id="323259"/>
    <lineage>
        <taxon>Archaea</taxon>
        <taxon>Methanobacteriati</taxon>
        <taxon>Methanobacteriota</taxon>
        <taxon>Stenosarchaea group</taxon>
        <taxon>Methanomicrobia</taxon>
        <taxon>Methanomicrobiales</taxon>
        <taxon>Methanospirillaceae</taxon>
        <taxon>Methanospirillum</taxon>
    </lineage>
</organism>
<protein>
    <recommendedName>
        <fullName evidence="1">Chaperonin GroEL</fullName>
        <ecNumber evidence="1">5.6.1.7</ecNumber>
    </recommendedName>
    <alternativeName>
        <fullName evidence="1">60 kDa chaperonin</fullName>
    </alternativeName>
    <alternativeName>
        <fullName evidence="1">Chaperonin-60</fullName>
        <shortName evidence="1">Cpn60</shortName>
    </alternativeName>
</protein>